<sequence>MVLMIIKGIFRRYEKWNPVHPTYGAFWGMGIGIGCGVGWGPGFGPEVIGYVGAGCGVGFSVGITLAGLGIGLPTNFLLAAPYNTVEATRKGAFNFFGKNLSTNGWSDLMPQIAGLQRQVSEICSGFNKKPHLNNAIDLKSFPLFISHDCGKFGSHLLHVRKGSEDNKSSAM</sequence>
<feature type="chain" id="PRO_0000089451" description="Cadmium-induced protein AS8">
    <location>
        <begin position="1"/>
        <end position="171"/>
    </location>
</feature>
<protein>
    <recommendedName>
        <fullName>Cadmium-induced protein AS8</fullName>
    </recommendedName>
</protein>
<organism>
    <name type="scientific">Arabidopsis thaliana</name>
    <name type="common">Mouse-ear cress</name>
    <dbReference type="NCBI Taxonomy" id="3702"/>
    <lineage>
        <taxon>Eukaryota</taxon>
        <taxon>Viridiplantae</taxon>
        <taxon>Streptophyta</taxon>
        <taxon>Embryophyta</taxon>
        <taxon>Tracheophyta</taxon>
        <taxon>Spermatophyta</taxon>
        <taxon>Magnoliopsida</taxon>
        <taxon>eudicotyledons</taxon>
        <taxon>Gunneridae</taxon>
        <taxon>Pentapetalae</taxon>
        <taxon>rosids</taxon>
        <taxon>malvids</taxon>
        <taxon>Brassicales</taxon>
        <taxon>Brassicaceae</taxon>
        <taxon>Camelineae</taxon>
        <taxon>Arabidopsis</taxon>
    </lineage>
</organism>
<dbReference type="EMBL" id="Z36896">
    <property type="protein sequence ID" value="CAA85363.1"/>
    <property type="molecule type" value="mRNA"/>
</dbReference>
<dbReference type="EMBL" id="AL021711">
    <property type="protein sequence ID" value="CAA16763.1"/>
    <property type="molecule type" value="Genomic_DNA"/>
</dbReference>
<dbReference type="EMBL" id="AL161550">
    <property type="protein sequence ID" value="CAB78909.1"/>
    <property type="molecule type" value="Genomic_DNA"/>
</dbReference>
<dbReference type="EMBL" id="CP002687">
    <property type="protein sequence ID" value="AEE84136.1"/>
    <property type="molecule type" value="Genomic_DNA"/>
</dbReference>
<dbReference type="EMBL" id="AY072542">
    <property type="protein sequence ID" value="AAL60050.1"/>
    <property type="molecule type" value="mRNA"/>
</dbReference>
<dbReference type="EMBL" id="AY142047">
    <property type="protein sequence ID" value="AAM98311.1"/>
    <property type="molecule type" value="mRNA"/>
</dbReference>
<dbReference type="PIR" id="S47247">
    <property type="entry name" value="S47247"/>
</dbReference>
<dbReference type="RefSeq" id="NP_193642.1">
    <property type="nucleotide sequence ID" value="NM_118025.4"/>
</dbReference>
<dbReference type="FunCoup" id="P42735">
    <property type="interactions" value="1251"/>
</dbReference>
<dbReference type="STRING" id="3702.P42735"/>
<dbReference type="PaxDb" id="3702-AT4G19070.1"/>
<dbReference type="ProteomicsDB" id="222604"/>
<dbReference type="EnsemblPlants" id="AT4G19070.1">
    <property type="protein sequence ID" value="AT4G19070.1"/>
    <property type="gene ID" value="AT4G19070"/>
</dbReference>
<dbReference type="GeneID" id="827645"/>
<dbReference type="Gramene" id="AT4G19070.1">
    <property type="protein sequence ID" value="AT4G19070.1"/>
    <property type="gene ID" value="AT4G19070"/>
</dbReference>
<dbReference type="KEGG" id="ath:AT4G19070"/>
<dbReference type="Araport" id="AT4G19070"/>
<dbReference type="TAIR" id="AT4G19070"/>
<dbReference type="eggNOG" id="ENOG502S2MU">
    <property type="taxonomic scope" value="Eukaryota"/>
</dbReference>
<dbReference type="HOGENOM" id="CLU_086805_1_0_1"/>
<dbReference type="InParanoid" id="P42735"/>
<dbReference type="OMA" id="ASSMCES"/>
<dbReference type="PhylomeDB" id="P42735"/>
<dbReference type="PRO" id="PR:P42735"/>
<dbReference type="Proteomes" id="UP000006548">
    <property type="component" value="Chromosome 4"/>
</dbReference>
<dbReference type="ExpressionAtlas" id="P42735">
    <property type="expression patterns" value="baseline and differential"/>
</dbReference>
<dbReference type="InterPro" id="IPR037735">
    <property type="entry name" value="AS8-like"/>
</dbReference>
<dbReference type="PANTHER" id="PTHR36778">
    <property type="entry name" value="CADMIUM-INDUCED PROTEIN AS8"/>
    <property type="match status" value="1"/>
</dbReference>
<dbReference type="PANTHER" id="PTHR36778:SF1">
    <property type="entry name" value="CADMIUM-INDUCED PROTEIN AS8"/>
    <property type="match status" value="1"/>
</dbReference>
<comment type="induction">
    <text>By cadmium.</text>
</comment>
<name>CDI8_ARATH</name>
<reference key="1">
    <citation type="journal article" date="1995" name="Plant Physiol.">
        <title>A cDNA differentially expressed by cadmium stress in Arabidopsis.</title>
        <authorList>
            <person name="Choi S.Y."/>
            <person name="Baek E.M."/>
            <person name="Lee S.Y."/>
        </authorList>
    </citation>
    <scope>NUCLEOTIDE SEQUENCE [MRNA]</scope>
    <source>
        <strain>cv. Columbia</strain>
    </source>
</reference>
<reference key="2">
    <citation type="journal article" date="1999" name="Nature">
        <title>Sequence and analysis of chromosome 4 of the plant Arabidopsis thaliana.</title>
        <authorList>
            <person name="Mayer K.F.X."/>
            <person name="Schueller C."/>
            <person name="Wambutt R."/>
            <person name="Murphy G."/>
            <person name="Volckaert G."/>
            <person name="Pohl T."/>
            <person name="Duesterhoeft A."/>
            <person name="Stiekema W."/>
            <person name="Entian K.-D."/>
            <person name="Terryn N."/>
            <person name="Harris B."/>
            <person name="Ansorge W."/>
            <person name="Brandt P."/>
            <person name="Grivell L.A."/>
            <person name="Rieger M."/>
            <person name="Weichselgartner M."/>
            <person name="de Simone V."/>
            <person name="Obermaier B."/>
            <person name="Mache R."/>
            <person name="Mueller M."/>
            <person name="Kreis M."/>
            <person name="Delseny M."/>
            <person name="Puigdomenech P."/>
            <person name="Watson M."/>
            <person name="Schmidtheini T."/>
            <person name="Reichert B."/>
            <person name="Portetelle D."/>
            <person name="Perez-Alonso M."/>
            <person name="Boutry M."/>
            <person name="Bancroft I."/>
            <person name="Vos P."/>
            <person name="Hoheisel J."/>
            <person name="Zimmermann W."/>
            <person name="Wedler H."/>
            <person name="Ridley P."/>
            <person name="Langham S.-A."/>
            <person name="McCullagh B."/>
            <person name="Bilham L."/>
            <person name="Robben J."/>
            <person name="van der Schueren J."/>
            <person name="Grymonprez B."/>
            <person name="Chuang Y.-J."/>
            <person name="Vandenbussche F."/>
            <person name="Braeken M."/>
            <person name="Weltjens I."/>
            <person name="Voet M."/>
            <person name="Bastiaens I."/>
            <person name="Aert R."/>
            <person name="Defoor E."/>
            <person name="Weitzenegger T."/>
            <person name="Bothe G."/>
            <person name="Ramsperger U."/>
            <person name="Hilbert H."/>
            <person name="Braun M."/>
            <person name="Holzer E."/>
            <person name="Brandt A."/>
            <person name="Peters S."/>
            <person name="van Staveren M."/>
            <person name="Dirkse W."/>
            <person name="Mooijman P."/>
            <person name="Klein Lankhorst R."/>
            <person name="Rose M."/>
            <person name="Hauf J."/>
            <person name="Koetter P."/>
            <person name="Berneiser S."/>
            <person name="Hempel S."/>
            <person name="Feldpausch M."/>
            <person name="Lamberth S."/>
            <person name="Van den Daele H."/>
            <person name="De Keyser A."/>
            <person name="Buysshaert C."/>
            <person name="Gielen J."/>
            <person name="Villarroel R."/>
            <person name="De Clercq R."/>
            <person name="van Montagu M."/>
            <person name="Rogers J."/>
            <person name="Cronin A."/>
            <person name="Quail M.A."/>
            <person name="Bray-Allen S."/>
            <person name="Clark L."/>
            <person name="Doggett J."/>
            <person name="Hall S."/>
            <person name="Kay M."/>
            <person name="Lennard N."/>
            <person name="McLay K."/>
            <person name="Mayes R."/>
            <person name="Pettett A."/>
            <person name="Rajandream M.A."/>
            <person name="Lyne M."/>
            <person name="Benes V."/>
            <person name="Rechmann S."/>
            <person name="Borkova D."/>
            <person name="Bloecker H."/>
            <person name="Scharfe M."/>
            <person name="Grimm M."/>
            <person name="Loehnert T.-H."/>
            <person name="Dose S."/>
            <person name="de Haan M."/>
            <person name="Maarse A.C."/>
            <person name="Schaefer M."/>
            <person name="Mueller-Auer S."/>
            <person name="Gabel C."/>
            <person name="Fuchs M."/>
            <person name="Fartmann B."/>
            <person name="Granderath K."/>
            <person name="Dauner D."/>
            <person name="Herzl A."/>
            <person name="Neumann S."/>
            <person name="Argiriou A."/>
            <person name="Vitale D."/>
            <person name="Liguori R."/>
            <person name="Piravandi E."/>
            <person name="Massenet O."/>
            <person name="Quigley F."/>
            <person name="Clabauld G."/>
            <person name="Muendlein A."/>
            <person name="Felber R."/>
            <person name="Schnabl S."/>
            <person name="Hiller R."/>
            <person name="Schmidt W."/>
            <person name="Lecharny A."/>
            <person name="Aubourg S."/>
            <person name="Chefdor F."/>
            <person name="Cooke R."/>
            <person name="Berger C."/>
            <person name="Monfort A."/>
            <person name="Casacuberta E."/>
            <person name="Gibbons T."/>
            <person name="Weber N."/>
            <person name="Vandenbol M."/>
            <person name="Bargues M."/>
            <person name="Terol J."/>
            <person name="Torres A."/>
            <person name="Perez-Perez A."/>
            <person name="Purnelle B."/>
            <person name="Bent E."/>
            <person name="Johnson S."/>
            <person name="Tacon D."/>
            <person name="Jesse T."/>
            <person name="Heijnen L."/>
            <person name="Schwarz S."/>
            <person name="Scholler P."/>
            <person name="Heber S."/>
            <person name="Francs P."/>
            <person name="Bielke C."/>
            <person name="Frishman D."/>
            <person name="Haase D."/>
            <person name="Lemcke K."/>
            <person name="Mewes H.-W."/>
            <person name="Stocker S."/>
            <person name="Zaccaria P."/>
            <person name="Bevan M."/>
            <person name="Wilson R.K."/>
            <person name="de la Bastide M."/>
            <person name="Habermann K."/>
            <person name="Parnell L."/>
            <person name="Dedhia N."/>
            <person name="Gnoj L."/>
            <person name="Schutz K."/>
            <person name="Huang E."/>
            <person name="Spiegel L."/>
            <person name="Sekhon M."/>
            <person name="Murray J."/>
            <person name="Sheet P."/>
            <person name="Cordes M."/>
            <person name="Abu-Threideh J."/>
            <person name="Stoneking T."/>
            <person name="Kalicki J."/>
            <person name="Graves T."/>
            <person name="Harmon G."/>
            <person name="Edwards J."/>
            <person name="Latreille P."/>
            <person name="Courtney L."/>
            <person name="Cloud J."/>
            <person name="Abbott A."/>
            <person name="Scott K."/>
            <person name="Johnson D."/>
            <person name="Minx P."/>
            <person name="Bentley D."/>
            <person name="Fulton B."/>
            <person name="Miller N."/>
            <person name="Greco T."/>
            <person name="Kemp K."/>
            <person name="Kramer J."/>
            <person name="Fulton L."/>
            <person name="Mardis E."/>
            <person name="Dante M."/>
            <person name="Pepin K."/>
            <person name="Hillier L.W."/>
            <person name="Nelson J."/>
            <person name="Spieth J."/>
            <person name="Ryan E."/>
            <person name="Andrews S."/>
            <person name="Geisel C."/>
            <person name="Layman D."/>
            <person name="Du H."/>
            <person name="Ali J."/>
            <person name="Berghoff A."/>
            <person name="Jones K."/>
            <person name="Drone K."/>
            <person name="Cotton M."/>
            <person name="Joshu C."/>
            <person name="Antonoiu B."/>
            <person name="Zidanic M."/>
            <person name="Strong C."/>
            <person name="Sun H."/>
            <person name="Lamar B."/>
            <person name="Yordan C."/>
            <person name="Ma P."/>
            <person name="Zhong J."/>
            <person name="Preston R."/>
            <person name="Vil D."/>
            <person name="Shekher M."/>
            <person name="Matero A."/>
            <person name="Shah R."/>
            <person name="Swaby I.K."/>
            <person name="O'Shaughnessy A."/>
            <person name="Rodriguez M."/>
            <person name="Hoffman J."/>
            <person name="Till S."/>
            <person name="Granat S."/>
            <person name="Shohdy N."/>
            <person name="Hasegawa A."/>
            <person name="Hameed A."/>
            <person name="Lodhi M."/>
            <person name="Johnson A."/>
            <person name="Chen E."/>
            <person name="Marra M.A."/>
            <person name="Martienssen R."/>
            <person name="McCombie W.R."/>
        </authorList>
    </citation>
    <scope>NUCLEOTIDE SEQUENCE [LARGE SCALE GENOMIC DNA]</scope>
    <source>
        <strain>cv. Columbia</strain>
    </source>
</reference>
<reference key="3">
    <citation type="journal article" date="2017" name="Plant J.">
        <title>Araport11: a complete reannotation of the Arabidopsis thaliana reference genome.</title>
        <authorList>
            <person name="Cheng C.Y."/>
            <person name="Krishnakumar V."/>
            <person name="Chan A.P."/>
            <person name="Thibaud-Nissen F."/>
            <person name="Schobel S."/>
            <person name="Town C.D."/>
        </authorList>
    </citation>
    <scope>GENOME REANNOTATION</scope>
    <source>
        <strain>cv. Columbia</strain>
    </source>
</reference>
<reference key="4">
    <citation type="journal article" date="2003" name="Science">
        <title>Empirical analysis of transcriptional activity in the Arabidopsis genome.</title>
        <authorList>
            <person name="Yamada K."/>
            <person name="Lim J."/>
            <person name="Dale J.M."/>
            <person name="Chen H."/>
            <person name="Shinn P."/>
            <person name="Palm C.J."/>
            <person name="Southwick A.M."/>
            <person name="Wu H.C."/>
            <person name="Kim C.J."/>
            <person name="Nguyen M."/>
            <person name="Pham P.K."/>
            <person name="Cheuk R.F."/>
            <person name="Karlin-Newmann G."/>
            <person name="Liu S.X."/>
            <person name="Lam B."/>
            <person name="Sakano H."/>
            <person name="Wu T."/>
            <person name="Yu G."/>
            <person name="Miranda M."/>
            <person name="Quach H.L."/>
            <person name="Tripp M."/>
            <person name="Chang C.H."/>
            <person name="Lee J.M."/>
            <person name="Toriumi M.J."/>
            <person name="Chan M.M."/>
            <person name="Tang C.C."/>
            <person name="Onodera C.S."/>
            <person name="Deng J.M."/>
            <person name="Akiyama K."/>
            <person name="Ansari Y."/>
            <person name="Arakawa T."/>
            <person name="Banh J."/>
            <person name="Banno F."/>
            <person name="Bowser L."/>
            <person name="Brooks S.Y."/>
            <person name="Carninci P."/>
            <person name="Chao Q."/>
            <person name="Choy N."/>
            <person name="Enju A."/>
            <person name="Goldsmith A.D."/>
            <person name="Gurjal M."/>
            <person name="Hansen N.F."/>
            <person name="Hayashizaki Y."/>
            <person name="Johnson-Hopson C."/>
            <person name="Hsuan V.W."/>
            <person name="Iida K."/>
            <person name="Karnes M."/>
            <person name="Khan S."/>
            <person name="Koesema E."/>
            <person name="Ishida J."/>
            <person name="Jiang P.X."/>
            <person name="Jones T."/>
            <person name="Kawai J."/>
            <person name="Kamiya A."/>
            <person name="Meyers C."/>
            <person name="Nakajima M."/>
            <person name="Narusaka M."/>
            <person name="Seki M."/>
            <person name="Sakurai T."/>
            <person name="Satou M."/>
            <person name="Tamse R."/>
            <person name="Vaysberg M."/>
            <person name="Wallender E.K."/>
            <person name="Wong C."/>
            <person name="Yamamura Y."/>
            <person name="Yuan S."/>
            <person name="Shinozaki K."/>
            <person name="Davis R.W."/>
            <person name="Theologis A."/>
            <person name="Ecker J.R."/>
        </authorList>
    </citation>
    <scope>NUCLEOTIDE SEQUENCE [LARGE SCALE MRNA]</scope>
    <source>
        <strain>cv. Columbia</strain>
    </source>
</reference>
<proteinExistence type="evidence at transcript level"/>
<accession>P42735</accession>
<gene>
    <name type="ordered locus">At4g19070</name>
    <name type="ORF">F13C5.230</name>
    <name type="ORF">T18B16.40</name>
</gene>
<keyword id="KW-0104">Cadmium</keyword>
<keyword id="KW-1185">Reference proteome</keyword>